<evidence type="ECO:0000256" key="1">
    <source>
        <dbReference type="SAM" id="MobiDB-lite"/>
    </source>
</evidence>
<evidence type="ECO:0000269" key="2">
    <source>
    </source>
</evidence>
<evidence type="ECO:0000269" key="3">
    <source>
    </source>
</evidence>
<evidence type="ECO:0000269" key="4">
    <source>
    </source>
</evidence>
<evidence type="ECO:0000269" key="5">
    <source>
    </source>
</evidence>
<evidence type="ECO:0000269" key="6">
    <source>
    </source>
</evidence>
<evidence type="ECO:0000305" key="7"/>
<evidence type="ECO:0007744" key="8">
    <source>
    </source>
</evidence>
<evidence type="ECO:0007744" key="9">
    <source>
    </source>
</evidence>
<comment type="function">
    <text evidence="2 3 5">Acts as a component of the peripheral membrane COG complex that is involved in intra-Golgi protein trafficking. COG is located at the cis- Golgi, and regulates tethering of retrograde intra-Golgi vesicles and possibly a number of other membrane trafficking events. COG3 is also involved in actin cytoskeleton organization.</text>
</comment>
<comment type="subunit">
    <text evidence="2 4 5">Component of the conserved oligomeric Golgi (COG or Sec34/Sec35) complex which consists of eight different proteins COG1-COG8.</text>
</comment>
<comment type="interaction">
    <interactant intactId="EBI-16605">
        <id>P40094</id>
    </interactant>
    <interactant intactId="EBI-4835">
        <id>P53079</id>
        <label>COG1</label>
    </interactant>
    <organismsDiffer>false</organismsDiffer>
    <experiments>13</experiments>
</comment>
<comment type="interaction">
    <interactant intactId="EBI-16605">
        <id>P40094</id>
    </interactant>
    <interactant intactId="EBI-16614">
        <id>P53271</id>
        <label>COG2</label>
    </interactant>
    <organismsDiffer>false</organismsDiffer>
    <experiments>17</experiments>
</comment>
<comment type="interaction">
    <interactant intactId="EBI-16605">
        <id>P40094</id>
    </interactant>
    <interactant intactId="EBI-4823">
        <id>Q06096</id>
        <label>COG4</label>
    </interactant>
    <organismsDiffer>false</organismsDiffer>
    <experiments>5</experiments>
</comment>
<comment type="interaction">
    <interactant intactId="EBI-16605">
        <id>P40094</id>
    </interactant>
    <interactant intactId="EBI-4841">
        <id>P53951</id>
        <label>COG5</label>
    </interactant>
    <organismsDiffer>false</organismsDiffer>
    <experiments>4</experiments>
</comment>
<comment type="interaction">
    <interactant intactId="EBI-16605">
        <id>P40094</id>
    </interactant>
    <interactant intactId="EBI-4829">
        <id>P53959</id>
        <label>COG6</label>
    </interactant>
    <organismsDiffer>false</organismsDiffer>
    <experiments>4</experiments>
</comment>
<comment type="interaction">
    <interactant intactId="EBI-16605">
        <id>P40094</id>
    </interactant>
    <interactant intactId="EBI-4847">
        <id>P53195</id>
        <label>COG7</label>
    </interactant>
    <organismsDiffer>false</organismsDiffer>
    <experiments>3</experiments>
</comment>
<comment type="interaction">
    <interactant intactId="EBI-16605">
        <id>P40094</id>
    </interactant>
    <interactant intactId="EBI-16930">
        <id>Q01590</id>
        <label>SED5</label>
    </interactant>
    <organismsDiffer>false</organismsDiffer>
    <experiments>4</experiments>
</comment>
<comment type="subcellular location">
    <subcellularLocation>
        <location evidence="2 3">Golgi apparatus membrane</location>
        <topology evidence="2 3">Peripheral membrane protein</topology>
        <orientation evidence="2 3">Cytoplasmic side</orientation>
    </subcellularLocation>
</comment>
<comment type="miscellaneous">
    <text evidence="6">Present with 4140 molecules/cell in log phase SD medium.</text>
</comment>
<comment type="similarity">
    <text evidence="7">Belongs to the COG3 family.</text>
</comment>
<organism>
    <name type="scientific">Saccharomyces cerevisiae (strain ATCC 204508 / S288c)</name>
    <name type="common">Baker's yeast</name>
    <dbReference type="NCBI Taxonomy" id="559292"/>
    <lineage>
        <taxon>Eukaryota</taxon>
        <taxon>Fungi</taxon>
        <taxon>Dikarya</taxon>
        <taxon>Ascomycota</taxon>
        <taxon>Saccharomycotina</taxon>
        <taxon>Saccharomycetes</taxon>
        <taxon>Saccharomycetales</taxon>
        <taxon>Saccharomycetaceae</taxon>
        <taxon>Saccharomyces</taxon>
    </lineage>
</organism>
<gene>
    <name type="primary">COG3</name>
    <name type="synonym">GRD20</name>
    <name type="synonym">SEC34</name>
    <name type="ordered locus">YER157W</name>
</gene>
<feature type="chain" id="PRO_0000213503" description="Conserved oligomeric Golgi complex subunit 3">
    <location>
        <begin position="1"/>
        <end position="801"/>
    </location>
</feature>
<feature type="region of interest" description="Disordered" evidence="1">
    <location>
        <begin position="470"/>
        <end position="489"/>
    </location>
</feature>
<feature type="compositionally biased region" description="Polar residues" evidence="1">
    <location>
        <begin position="471"/>
        <end position="480"/>
    </location>
</feature>
<feature type="modified residue" description="Phosphoserine" evidence="8">
    <location>
        <position position="507"/>
    </location>
</feature>
<feature type="modified residue" description="Phosphoserine" evidence="8 9">
    <location>
        <position position="647"/>
    </location>
</feature>
<name>COG3_YEAST</name>
<proteinExistence type="evidence at protein level"/>
<protein>
    <recommendedName>
        <fullName>Conserved oligomeric Golgi complex subunit 3</fullName>
        <shortName>COG complex subunit 3</shortName>
    </recommendedName>
    <alternativeName>
        <fullName>Component of oligomeric Golgi complex 3</fullName>
    </alternativeName>
    <alternativeName>
        <fullName>Protein SEC34</fullName>
    </alternativeName>
</protein>
<reference key="1">
    <citation type="journal article" date="1997" name="Nature">
        <title>The nucleotide sequence of Saccharomyces cerevisiae chromosome V.</title>
        <authorList>
            <person name="Dietrich F.S."/>
            <person name="Mulligan J.T."/>
            <person name="Hennessy K.M."/>
            <person name="Yelton M.A."/>
            <person name="Allen E."/>
            <person name="Araujo R."/>
            <person name="Aviles E."/>
            <person name="Berno A."/>
            <person name="Brennan T."/>
            <person name="Carpenter J."/>
            <person name="Chen E."/>
            <person name="Cherry J.M."/>
            <person name="Chung E."/>
            <person name="Duncan M."/>
            <person name="Guzman E."/>
            <person name="Hartzell G."/>
            <person name="Hunicke-Smith S."/>
            <person name="Hyman R.W."/>
            <person name="Kayser A."/>
            <person name="Komp C."/>
            <person name="Lashkari D."/>
            <person name="Lew H."/>
            <person name="Lin D."/>
            <person name="Mosedale D."/>
            <person name="Nakahara K."/>
            <person name="Namath A."/>
            <person name="Norgren R."/>
            <person name="Oefner P."/>
            <person name="Oh C."/>
            <person name="Petel F.X."/>
            <person name="Roberts D."/>
            <person name="Sehl P."/>
            <person name="Schramm S."/>
            <person name="Shogren T."/>
            <person name="Smith V."/>
            <person name="Taylor P."/>
            <person name="Wei Y."/>
            <person name="Botstein D."/>
            <person name="Davis R.W."/>
        </authorList>
    </citation>
    <scope>NUCLEOTIDE SEQUENCE [LARGE SCALE GENOMIC DNA]</scope>
    <source>
        <strain>ATCC 204508 / S288c</strain>
    </source>
</reference>
<reference key="2">
    <citation type="journal article" date="2014" name="G3 (Bethesda)">
        <title>The reference genome sequence of Saccharomyces cerevisiae: Then and now.</title>
        <authorList>
            <person name="Engel S.R."/>
            <person name="Dietrich F.S."/>
            <person name="Fisk D.G."/>
            <person name="Binkley G."/>
            <person name="Balakrishnan R."/>
            <person name="Costanzo M.C."/>
            <person name="Dwight S.S."/>
            <person name="Hitz B.C."/>
            <person name="Karra K."/>
            <person name="Nash R.S."/>
            <person name="Weng S."/>
            <person name="Wong E.D."/>
            <person name="Lloyd P."/>
            <person name="Skrzypek M.S."/>
            <person name="Miyasato S.R."/>
            <person name="Simison M."/>
            <person name="Cherry J.M."/>
        </authorList>
    </citation>
    <scope>GENOME REANNOTATION</scope>
    <source>
        <strain>ATCC 204508 / S288c</strain>
    </source>
</reference>
<reference key="3">
    <citation type="journal article" date="1999" name="J. Cell Biol.">
        <title>Sec34p, a protein required for vesicle tethering to the yeast Golgi apparatus, is in a complex with Sec35p.</title>
        <authorList>
            <person name="VanRheenen S.M."/>
            <person name="Cao X."/>
            <person name="Sapperstein S.K."/>
            <person name="Chiang E.C."/>
            <person name="Lupashin V.V."/>
            <person name="Barlowe C."/>
            <person name="Waters M.G."/>
        </authorList>
    </citation>
    <scope>FUNCTION</scope>
    <scope>SUBUNIT</scope>
    <scope>SUBCELLULAR LOCATION</scope>
</reference>
<reference key="4">
    <citation type="journal article" date="1999" name="Mol. Biol. Cell">
        <title>The yeast GRD20 gene is required for protein sorting in the trans-Golgi network/endosomal system and for polarization of the actin cytoskeleton.</title>
        <authorList>
            <person name="Spelbrink R.G."/>
            <person name="Nothwehr S.F."/>
        </authorList>
    </citation>
    <scope>FUNCTION</scope>
    <scope>SUBCELLULAR LOCATION</scope>
</reference>
<reference key="5">
    <citation type="journal article" date="2001" name="Dev. Cell">
        <title>The Sec34/35 Golgi transport complex is related to the exocyst, defining a family of complexes involved in multiple steps of membrane traffic.</title>
        <authorList>
            <person name="Whyte J.R."/>
            <person name="Munro S."/>
        </authorList>
    </citation>
    <scope>SUBUNIT</scope>
</reference>
<reference key="6">
    <citation type="journal article" date="2002" name="Mol. Biol. Cell">
        <title>Identification of sec36p, sec37p, and sec38p: components of yeast complex that contains sec34p and sec35p.</title>
        <authorList>
            <person name="Ram R.J."/>
            <person name="Li B."/>
            <person name="Kaiser C.A."/>
        </authorList>
    </citation>
    <scope>FUNCTION</scope>
    <scope>IDENTIFICATION IN THE COG COMPLEX</scope>
</reference>
<reference key="7">
    <citation type="journal article" date="2003" name="Nature">
        <title>Global analysis of protein expression in yeast.</title>
        <authorList>
            <person name="Ghaemmaghami S."/>
            <person name="Huh W.-K."/>
            <person name="Bower K."/>
            <person name="Howson R.W."/>
            <person name="Belle A."/>
            <person name="Dephoure N."/>
            <person name="O'Shea E.K."/>
            <person name="Weissman J.S."/>
        </authorList>
    </citation>
    <scope>LEVEL OF PROTEIN EXPRESSION [LARGE SCALE ANALYSIS]</scope>
</reference>
<reference key="8">
    <citation type="journal article" date="2004" name="J. Biol. Chem.">
        <title>The binary interacting network of the conserved oligomeric Golgi tethering complex.</title>
        <authorList>
            <person name="Loh E."/>
            <person name="Hong W."/>
        </authorList>
    </citation>
    <scope>COMPOSITION OF THE COG COMPLEX</scope>
    <scope>INTERACTION WITH COG1 AND COG2</scope>
</reference>
<reference key="9">
    <citation type="journal article" date="2007" name="J. Proteome Res.">
        <title>Large-scale phosphorylation analysis of alpha-factor-arrested Saccharomyces cerevisiae.</title>
        <authorList>
            <person name="Li X."/>
            <person name="Gerber S.A."/>
            <person name="Rudner A.D."/>
            <person name="Beausoleil S.A."/>
            <person name="Haas W."/>
            <person name="Villen J."/>
            <person name="Elias J.E."/>
            <person name="Gygi S.P."/>
        </authorList>
    </citation>
    <scope>PHOSPHORYLATION [LARGE SCALE ANALYSIS] AT SER-507 AND SER-647</scope>
    <scope>IDENTIFICATION BY MASS SPECTROMETRY [LARGE SCALE ANALYSIS]</scope>
    <source>
        <strain>ADR376</strain>
    </source>
</reference>
<reference key="10">
    <citation type="journal article" date="2008" name="Mol. Cell. Proteomics">
        <title>A multidimensional chromatography technology for in-depth phosphoproteome analysis.</title>
        <authorList>
            <person name="Albuquerque C.P."/>
            <person name="Smolka M.B."/>
            <person name="Payne S.H."/>
            <person name="Bafna V."/>
            <person name="Eng J."/>
            <person name="Zhou H."/>
        </authorList>
    </citation>
    <scope>IDENTIFICATION BY MASS SPECTROMETRY [LARGE SCALE ANALYSIS]</scope>
</reference>
<reference key="11">
    <citation type="journal article" date="2009" name="Science">
        <title>Global analysis of Cdk1 substrate phosphorylation sites provides insights into evolution.</title>
        <authorList>
            <person name="Holt L.J."/>
            <person name="Tuch B.B."/>
            <person name="Villen J."/>
            <person name="Johnson A.D."/>
            <person name="Gygi S.P."/>
            <person name="Morgan D.O."/>
        </authorList>
    </citation>
    <scope>PHOSPHORYLATION [LARGE SCALE ANALYSIS] AT SER-647</scope>
    <scope>IDENTIFICATION BY MASS SPECTROMETRY [LARGE SCALE ANALYSIS]</scope>
</reference>
<accession>P40094</accession>
<accession>D3DM64</accession>
<keyword id="KW-0333">Golgi apparatus</keyword>
<keyword id="KW-0472">Membrane</keyword>
<keyword id="KW-0597">Phosphoprotein</keyword>
<keyword id="KW-0653">Protein transport</keyword>
<keyword id="KW-1185">Reference proteome</keyword>
<keyword id="KW-0813">Transport</keyword>
<dbReference type="EMBL" id="U18917">
    <property type="protein sequence ID" value="AAB64684.1"/>
    <property type="molecule type" value="Genomic_DNA"/>
</dbReference>
<dbReference type="EMBL" id="BK006939">
    <property type="protein sequence ID" value="DAA07818.1"/>
    <property type="molecule type" value="Genomic_DNA"/>
</dbReference>
<dbReference type="PIR" id="S50660">
    <property type="entry name" value="S50660"/>
</dbReference>
<dbReference type="RefSeq" id="NP_011084.1">
    <property type="nucleotide sequence ID" value="NM_001179047.1"/>
</dbReference>
<dbReference type="SMR" id="P40094"/>
<dbReference type="BioGRID" id="36907">
    <property type="interactions" value="1033"/>
</dbReference>
<dbReference type="ComplexPortal" id="CPX-1840">
    <property type="entry name" value="COG Golgi transport complex"/>
</dbReference>
<dbReference type="DIP" id="DIP-4728N"/>
<dbReference type="FunCoup" id="P40094">
    <property type="interactions" value="833"/>
</dbReference>
<dbReference type="IntAct" id="P40094">
    <property type="interactions" value="25"/>
</dbReference>
<dbReference type="MINT" id="P40094"/>
<dbReference type="STRING" id="4932.YER157W"/>
<dbReference type="iPTMnet" id="P40094"/>
<dbReference type="PaxDb" id="4932-YER157W"/>
<dbReference type="PeptideAtlas" id="P40094"/>
<dbReference type="EnsemblFungi" id="YER157W_mRNA">
    <property type="protein sequence ID" value="YER157W"/>
    <property type="gene ID" value="YER157W"/>
</dbReference>
<dbReference type="GeneID" id="856901"/>
<dbReference type="KEGG" id="sce:YER157W"/>
<dbReference type="AGR" id="SGD:S000000959"/>
<dbReference type="SGD" id="S000000959">
    <property type="gene designation" value="COG3"/>
</dbReference>
<dbReference type="VEuPathDB" id="FungiDB:YER157W"/>
<dbReference type="eggNOG" id="KOG2604">
    <property type="taxonomic scope" value="Eukaryota"/>
</dbReference>
<dbReference type="GeneTree" id="ENSGT00390000015682"/>
<dbReference type="HOGENOM" id="CLU_011639_2_0_1"/>
<dbReference type="InParanoid" id="P40094"/>
<dbReference type="OMA" id="DEFELWG"/>
<dbReference type="OrthoDB" id="296793at2759"/>
<dbReference type="BioCyc" id="YEAST:G3O-30318-MONOMER"/>
<dbReference type="BioGRID-ORCS" id="856901">
    <property type="hits" value="0 hits in 10 CRISPR screens"/>
</dbReference>
<dbReference type="PRO" id="PR:P40094"/>
<dbReference type="Proteomes" id="UP000002311">
    <property type="component" value="Chromosome V"/>
</dbReference>
<dbReference type="RNAct" id="P40094">
    <property type="molecule type" value="protein"/>
</dbReference>
<dbReference type="GO" id="GO:0005801">
    <property type="term" value="C:cis-Golgi network"/>
    <property type="evidence" value="ECO:0007669"/>
    <property type="project" value="InterPro"/>
</dbReference>
<dbReference type="GO" id="GO:0000139">
    <property type="term" value="C:Golgi membrane"/>
    <property type="evidence" value="ECO:0000303"/>
    <property type="project" value="ComplexPortal"/>
</dbReference>
<dbReference type="GO" id="GO:0017119">
    <property type="term" value="C:Golgi transport complex"/>
    <property type="evidence" value="ECO:0000315"/>
    <property type="project" value="SGD"/>
</dbReference>
<dbReference type="GO" id="GO:0140312">
    <property type="term" value="F:cargo adaptor activity"/>
    <property type="evidence" value="ECO:0000315"/>
    <property type="project" value="SGD"/>
</dbReference>
<dbReference type="GO" id="GO:0006914">
    <property type="term" value="P:autophagy"/>
    <property type="evidence" value="ECO:0000318"/>
    <property type="project" value="GO_Central"/>
</dbReference>
<dbReference type="GO" id="GO:0032258">
    <property type="term" value="P:cytoplasm to vacuole targeting by the Cvt pathway"/>
    <property type="evidence" value="ECO:0000315"/>
    <property type="project" value="SGD"/>
</dbReference>
<dbReference type="GO" id="GO:0006888">
    <property type="term" value="P:endoplasmic reticulum to Golgi vesicle-mediated transport"/>
    <property type="evidence" value="ECO:0000316"/>
    <property type="project" value="SGD"/>
</dbReference>
<dbReference type="GO" id="GO:0007030">
    <property type="term" value="P:Golgi organization"/>
    <property type="evidence" value="ECO:0000318"/>
    <property type="project" value="GO_Central"/>
</dbReference>
<dbReference type="GO" id="GO:0006891">
    <property type="term" value="P:intra-Golgi vesicle-mediated transport"/>
    <property type="evidence" value="ECO:0000315"/>
    <property type="project" value="SGD"/>
</dbReference>
<dbReference type="GO" id="GO:0016236">
    <property type="term" value="P:macroautophagy"/>
    <property type="evidence" value="ECO:0000315"/>
    <property type="project" value="SGD"/>
</dbReference>
<dbReference type="GO" id="GO:0000425">
    <property type="term" value="P:pexophagy"/>
    <property type="evidence" value="ECO:0000315"/>
    <property type="project" value="SGD"/>
</dbReference>
<dbReference type="GO" id="GO:0000301">
    <property type="term" value="P:retrograde transport, vesicle recycling within Golgi"/>
    <property type="evidence" value="ECO:0000315"/>
    <property type="project" value="SGD"/>
</dbReference>
<dbReference type="InterPro" id="IPR048685">
    <property type="entry name" value="COG3_C"/>
</dbReference>
<dbReference type="InterPro" id="IPR048320">
    <property type="entry name" value="COG3_N"/>
</dbReference>
<dbReference type="InterPro" id="IPR007265">
    <property type="entry name" value="COG_su3"/>
</dbReference>
<dbReference type="PANTHER" id="PTHR13302">
    <property type="entry name" value="CONSERVED OLIGOMERIC GOLGI COMPLEX COMPONENT 3"/>
    <property type="match status" value="1"/>
</dbReference>
<dbReference type="PANTHER" id="PTHR13302:SF8">
    <property type="entry name" value="CONSERVED OLIGOMERIC GOLGI COMPLEX SUBUNIT 3"/>
    <property type="match status" value="1"/>
</dbReference>
<dbReference type="Pfam" id="PF20671">
    <property type="entry name" value="COG3_C"/>
    <property type="match status" value="1"/>
</dbReference>
<dbReference type="Pfam" id="PF04136">
    <property type="entry name" value="COG3_N"/>
    <property type="match status" value="1"/>
</dbReference>
<sequence>MARSRKNSLVRDIASHPTIPESQTIVGLLDDSYLFDKLKKLSLAVENSDSLQRTDVSEGCSEVNGSEATTSADVKKTNKYLYYTTYLDQLNIKIDEYKVVLDQTRQVNDQLDSSIKKFRKISQDTGAFIEETKTIYEKQSKLSNLTESIPKALHYFEVLDPIMRRLNHATSPAIVKKSSFTTMLATIDESLRFLDENSDLKDAAAYRIKFKQCLIRACELISHFLTNLLKQTNQEILDKTKNKNSLTGLPSTTRDAFLYSKFYTIADTFKIQVSEIVKRSNEKAYNKYHDELNSILYECFNHYFQTRLRLLTPVIWSHIDEIVVKDKDQGLVKFIQDGKVYFQQLCADEYKLFVEFFPEKECRFKINQWFLQLCEPLYDSIRVRVLKETDICTLCDSVTLFAPYYEFEEGSEEYVKQFTDIQYDKLFEPIVQKVQARLILRVQIYVQQNILSYRPTRDVFMISNRRRKSKTSLQGGNEDATTSDDNPDPLLESYLSSFKNRSILPISPNDADDKSIDSEESTDKISQLQTYYPPLLKTLALLSKIYEMINSVVFDDLAHHVVHDCIVSLRNAYDMVIKSSAGKSDFNNLDISLAYLKNLLMLRDSIQNFNIQYTVNETYLDFSGVEGFFKSLKENGRNVLKKTKSSSILTLARELVPKVVNNMVDARTELISELRNVIKDFTESTSLELIDDTLDINSDEDLLSKNVKLRENIKARLPRIYEQILNYIDDQEIVTNLLDAVQELITQSYSKYYETITELAENGKFAKDQVADVMYLDVFTDFFAKEVADLLRNGDIDTITK</sequence>